<accession>P44699</accession>
<proteinExistence type="inferred from homology"/>
<name>Y418_HAEIN</name>
<comment type="subcellular location">
    <subcellularLocation>
        <location evidence="2">Cell inner membrane</location>
        <topology evidence="2">Multi-pass membrane protein</topology>
    </subcellularLocation>
</comment>
<comment type="similarity">
    <text evidence="2">Belongs to the major facilitator superfamily. Metabolite:H+ Symporter (MHS) family (TC 2.A.1.6) family.</text>
</comment>
<feature type="chain" id="PRO_0000050489" description="Putative metabolite transport protein HI_0418">
    <location>
        <begin position="1"/>
        <end position="447"/>
    </location>
</feature>
<feature type="topological domain" description="Cytoplasmic" evidence="1">
    <location>
        <begin position="1"/>
        <end position="28"/>
    </location>
</feature>
<feature type="transmembrane region" description="Helical; Name=1" evidence="1">
    <location>
        <begin position="29"/>
        <end position="49"/>
    </location>
</feature>
<feature type="topological domain" description="Periplasmic" evidence="1">
    <location>
        <begin position="50"/>
        <end position="63"/>
    </location>
</feature>
<feature type="transmembrane region" description="Helical; Name=2" evidence="1">
    <location>
        <begin position="64"/>
        <end position="84"/>
    </location>
</feature>
<feature type="topological domain" description="Cytoplasmic" evidence="1">
    <location>
        <begin position="85"/>
        <end position="96"/>
    </location>
</feature>
<feature type="transmembrane region" description="Helical; Name=3" evidence="1">
    <location>
        <begin position="97"/>
        <end position="117"/>
    </location>
</feature>
<feature type="topological domain" description="Periplasmic" evidence="1">
    <location>
        <begin position="118"/>
        <end position="119"/>
    </location>
</feature>
<feature type="transmembrane region" description="Helical; Name=4" evidence="1">
    <location>
        <begin position="120"/>
        <end position="140"/>
    </location>
</feature>
<feature type="topological domain" description="Cytoplasmic" evidence="1">
    <location>
        <begin position="141"/>
        <end position="167"/>
    </location>
</feature>
<feature type="transmembrane region" description="Helical; Name=5" evidence="1">
    <location>
        <begin position="168"/>
        <end position="188"/>
    </location>
</feature>
<feature type="topological domain" description="Periplasmic" evidence="1">
    <location>
        <begin position="189"/>
        <end position="194"/>
    </location>
</feature>
<feature type="transmembrane region" description="Helical; Name=6" evidence="1">
    <location>
        <begin position="195"/>
        <end position="215"/>
    </location>
</feature>
<feature type="topological domain" description="Cytoplasmic" evidence="1">
    <location>
        <begin position="216"/>
        <end position="249"/>
    </location>
</feature>
<feature type="transmembrane region" description="Helical; Name=7" evidence="1">
    <location>
        <begin position="250"/>
        <end position="270"/>
    </location>
</feature>
<feature type="topological domain" description="Periplasmic" evidence="1">
    <location>
        <begin position="271"/>
        <end position="295"/>
    </location>
</feature>
<feature type="transmembrane region" description="Helical; Name=8" evidence="1">
    <location>
        <begin position="296"/>
        <end position="316"/>
    </location>
</feature>
<feature type="topological domain" description="Cytoplasmic" evidence="1">
    <location>
        <begin position="317"/>
        <end position="325"/>
    </location>
</feature>
<feature type="transmembrane region" description="Helical; Name=9" evidence="1">
    <location>
        <begin position="326"/>
        <end position="346"/>
    </location>
</feature>
<feature type="topological domain" description="Periplasmic" evidence="1">
    <location>
        <begin position="347"/>
        <end position="354"/>
    </location>
</feature>
<feature type="transmembrane region" description="Helical; Name=10" evidence="1">
    <location>
        <begin position="355"/>
        <end position="375"/>
    </location>
</feature>
<feature type="topological domain" description="Cytoplasmic" evidence="1">
    <location>
        <begin position="376"/>
        <end position="390"/>
    </location>
</feature>
<feature type="transmembrane region" description="Helical; Name=11" evidence="1">
    <location>
        <begin position="391"/>
        <end position="411"/>
    </location>
</feature>
<feature type="topological domain" description="Periplasmic" evidence="1">
    <location>
        <begin position="412"/>
        <end position="418"/>
    </location>
</feature>
<feature type="transmembrane region" description="Helical; Name=12" evidence="1">
    <location>
        <begin position="419"/>
        <end position="439"/>
    </location>
</feature>
<feature type="topological domain" description="Cytoplasmic" evidence="1">
    <location>
        <begin position="440"/>
        <end position="447"/>
    </location>
</feature>
<sequence>MCKPQQKHYGRQVMNTQNSLKQVATATMVGTAIEYFDNYIYAMAAVLVFNHQFFHAVDPLSGQIAALSTLALTFIARPLGAILFGHFGDRFGRKNTFVMSLLLMGISTVVIGLLPTYDSIGIWATILLCLCRIGQGIGLGGEWGGAALVAVENAPEGKRGWYGTFPQLGAPLGLLLANGVFLGITAIFGQEAMTEWAWRIPFLSSVILVAIGLYVRLKLTEAPIFLAALNKPKPKRLPMLEVVTTHFKPFFLGMLVCIAGYVLFYIMIAFSQIYAKSAPTVSEAGYAMGLGFSPQIFTALLMASAVSLAITIAASGKYIDKIGRRTWLIWTTVGVAIFGLSLPLFLENGTTTSLFWFLFIGMGLIGMGYGPLASFLPELFPTHARYSGASLTYNIAGLFGASVAAIIALPLNAHYGLKGVGIYLTLNAVLSLVGLWFISETKDKLLS</sequence>
<gene>
    <name type="ordered locus">HI_0418</name>
</gene>
<organism>
    <name type="scientific">Haemophilus influenzae (strain ATCC 51907 / DSM 11121 / KW20 / Rd)</name>
    <dbReference type="NCBI Taxonomy" id="71421"/>
    <lineage>
        <taxon>Bacteria</taxon>
        <taxon>Pseudomonadati</taxon>
        <taxon>Pseudomonadota</taxon>
        <taxon>Gammaproteobacteria</taxon>
        <taxon>Pasteurellales</taxon>
        <taxon>Pasteurellaceae</taxon>
        <taxon>Haemophilus</taxon>
    </lineage>
</organism>
<dbReference type="EMBL" id="L42023">
    <property type="protein sequence ID" value="AAC22076.1"/>
    <property type="molecule type" value="Genomic_DNA"/>
</dbReference>
<dbReference type="PIR" id="B64152">
    <property type="entry name" value="B64152"/>
</dbReference>
<dbReference type="RefSeq" id="NP_438580.1">
    <property type="nucleotide sequence ID" value="NC_000907.1"/>
</dbReference>
<dbReference type="SMR" id="P44699"/>
<dbReference type="STRING" id="71421.HI_0418"/>
<dbReference type="TCDB" id="2.A.1.6.12">
    <property type="family name" value="the major facilitator superfamily (mfs)"/>
</dbReference>
<dbReference type="EnsemblBacteria" id="AAC22076">
    <property type="protein sequence ID" value="AAC22076"/>
    <property type="gene ID" value="HI_0418"/>
</dbReference>
<dbReference type="KEGG" id="hin:HI_0418"/>
<dbReference type="PATRIC" id="fig|71421.8.peg.438"/>
<dbReference type="eggNOG" id="COG0477">
    <property type="taxonomic scope" value="Bacteria"/>
</dbReference>
<dbReference type="HOGENOM" id="CLU_001265_39_5_6"/>
<dbReference type="OrthoDB" id="3690818at2"/>
<dbReference type="PhylomeDB" id="P44699"/>
<dbReference type="BioCyc" id="HINF71421:G1GJ1-433-MONOMER"/>
<dbReference type="Proteomes" id="UP000000579">
    <property type="component" value="Chromosome"/>
</dbReference>
<dbReference type="GO" id="GO:0005886">
    <property type="term" value="C:plasma membrane"/>
    <property type="evidence" value="ECO:0007669"/>
    <property type="project" value="UniProtKB-SubCell"/>
</dbReference>
<dbReference type="GO" id="GO:0022857">
    <property type="term" value="F:transmembrane transporter activity"/>
    <property type="evidence" value="ECO:0007669"/>
    <property type="project" value="InterPro"/>
</dbReference>
<dbReference type="CDD" id="cd17369">
    <property type="entry name" value="MFS_ShiA_like"/>
    <property type="match status" value="1"/>
</dbReference>
<dbReference type="Gene3D" id="1.20.1250.20">
    <property type="entry name" value="MFS general substrate transporter like domains"/>
    <property type="match status" value="2"/>
</dbReference>
<dbReference type="InterPro" id="IPR011701">
    <property type="entry name" value="MFS"/>
</dbReference>
<dbReference type="InterPro" id="IPR020846">
    <property type="entry name" value="MFS_dom"/>
</dbReference>
<dbReference type="InterPro" id="IPR036259">
    <property type="entry name" value="MFS_trans_sf"/>
</dbReference>
<dbReference type="InterPro" id="IPR004736">
    <property type="entry name" value="MHS_symport"/>
</dbReference>
<dbReference type="InterPro" id="IPR005829">
    <property type="entry name" value="Sugar_transporter_CS"/>
</dbReference>
<dbReference type="NCBIfam" id="TIGR00883">
    <property type="entry name" value="2A0106"/>
    <property type="match status" value="1"/>
</dbReference>
<dbReference type="PANTHER" id="PTHR43045:SF2">
    <property type="entry name" value="INNER MEMBRANE METABOLITE TRANSPORT PROTEIN YHJE"/>
    <property type="match status" value="1"/>
</dbReference>
<dbReference type="PANTHER" id="PTHR43045">
    <property type="entry name" value="SHIKIMATE TRANSPORTER"/>
    <property type="match status" value="1"/>
</dbReference>
<dbReference type="Pfam" id="PF07690">
    <property type="entry name" value="MFS_1"/>
    <property type="match status" value="1"/>
</dbReference>
<dbReference type="SUPFAM" id="SSF103473">
    <property type="entry name" value="MFS general substrate transporter"/>
    <property type="match status" value="1"/>
</dbReference>
<dbReference type="PROSITE" id="PS50850">
    <property type="entry name" value="MFS"/>
    <property type="match status" value="1"/>
</dbReference>
<dbReference type="PROSITE" id="PS00216">
    <property type="entry name" value="SUGAR_TRANSPORT_1"/>
    <property type="match status" value="1"/>
</dbReference>
<reference key="1">
    <citation type="journal article" date="1995" name="Science">
        <title>Whole-genome random sequencing and assembly of Haemophilus influenzae Rd.</title>
        <authorList>
            <person name="Fleischmann R.D."/>
            <person name="Adams M.D."/>
            <person name="White O."/>
            <person name="Clayton R.A."/>
            <person name="Kirkness E.F."/>
            <person name="Kerlavage A.R."/>
            <person name="Bult C.J."/>
            <person name="Tomb J.-F."/>
            <person name="Dougherty B.A."/>
            <person name="Merrick J.M."/>
            <person name="McKenney K."/>
            <person name="Sutton G.G."/>
            <person name="FitzHugh W."/>
            <person name="Fields C.A."/>
            <person name="Gocayne J.D."/>
            <person name="Scott J.D."/>
            <person name="Shirley R."/>
            <person name="Liu L.-I."/>
            <person name="Glodek A."/>
            <person name="Kelley J.M."/>
            <person name="Weidman J.F."/>
            <person name="Phillips C.A."/>
            <person name="Spriggs T."/>
            <person name="Hedblom E."/>
            <person name="Cotton M.D."/>
            <person name="Utterback T.R."/>
            <person name="Hanna M.C."/>
            <person name="Nguyen D.T."/>
            <person name="Saudek D.M."/>
            <person name="Brandon R.C."/>
            <person name="Fine L.D."/>
            <person name="Fritchman J.L."/>
            <person name="Fuhrmann J.L."/>
            <person name="Geoghagen N.S.M."/>
            <person name="Gnehm C.L."/>
            <person name="McDonald L.A."/>
            <person name="Small K.V."/>
            <person name="Fraser C.M."/>
            <person name="Smith H.O."/>
            <person name="Venter J.C."/>
        </authorList>
    </citation>
    <scope>NUCLEOTIDE SEQUENCE [LARGE SCALE GENOMIC DNA]</scope>
    <source>
        <strain>ATCC 51907 / DSM 11121 / KW20 / Rd</strain>
    </source>
</reference>
<keyword id="KW-0997">Cell inner membrane</keyword>
<keyword id="KW-1003">Cell membrane</keyword>
<keyword id="KW-0472">Membrane</keyword>
<keyword id="KW-1185">Reference proteome</keyword>
<keyword id="KW-0812">Transmembrane</keyword>
<keyword id="KW-1133">Transmembrane helix</keyword>
<keyword id="KW-0813">Transport</keyword>
<protein>
    <recommendedName>
        <fullName>Putative metabolite transport protein HI_0418</fullName>
    </recommendedName>
</protein>
<evidence type="ECO:0000255" key="1"/>
<evidence type="ECO:0000305" key="2"/>